<feature type="signal peptide" evidence="1">
    <location>
        <begin position="1"/>
        <end position="17"/>
    </location>
</feature>
<feature type="chain" id="PRO_5001705911" description="T cell receptor gamma variable 2" evidence="1">
    <location>
        <begin position="18"/>
        <end position="118"/>
    </location>
</feature>
<feature type="domain" description="Ig-like" evidence="2">
    <location>
        <begin position="18"/>
        <end position="118" status="greater than"/>
    </location>
</feature>
<feature type="disulfide bond" evidence="2">
    <location>
        <begin position="41"/>
        <end position="113"/>
    </location>
</feature>
<feature type="non-terminal residue">
    <location>
        <position position="118"/>
    </location>
</feature>
<comment type="function">
    <text evidence="3 4 5 6 7">V region of the variable domain of T cell receptor (TR) gamma chain that participates in the antigen recognition (PubMed:24600447). Gamma-delta TRs recognize a variety of self and foreign non-peptide antigens frequently expressed at the epithelial boundaries between the host and external environment, including endogenous lipids presented by MH-like protein CD1D and phosphoantigens presented by butyrophilin-like molecule BTN3A1. Upon antigen recognition induces rapid, innate-like immune responses involved in pathogen clearance and tissue repair (PubMed:23348415, PubMed:28920588). Binding of gamma-delta TR complex to antigen triggers phosphorylation of immunoreceptor tyrosine-based activation motifs (ITAMs) in the CD3 chains by the LCK and FYN kinases, allowing the recruitment, phosphorylation, and activation of ZAP70 that facilitates phosphorylation of the scaffolding proteins LCP2 and LAT. This lead to the formation of a supramolecular signalosome that recruits the phospholipase PLCG1, resulting in calcium mobilization and ERK activation, ultimately leading to T cell expansion and differentiation into effector cells (PubMed:25674089). Gamma-delta TRs are produced through somatic rearrangement of a limited repertoire of variable (V), diversity (D), and joining (J) genes. The potential diversity of gamma-delta TRs is conferred by the unique ability to rearrange (D) genes in tandem and to utilize all three reading frames. The combinatorial diversity is considerably increased by the sequence exonuclease trimming and random nucleotide (N) region additions which occur during the V-(D)-J rearrangements (PubMed:24387714).</text>
</comment>
<comment type="subunit">
    <text evidence="6">Gamma-delta TR is a heterodimer composed of a gamma and delta chain; disulfide-linked. The gamma-delta TR is associated with the transmembrane signaling CD3 coreceptor proteins following the stoichiometry: a single gamma-delta TR heterodimer associates with one CD3D-CD3E heterodimer, one CD3G-CD3E heterodimer and one CD247 homodimer forming a stable octameric structure. Upon activation, gamma-delta TR complex associates with FCER1G to initiate intracellular signaling.</text>
</comment>
<comment type="subcellular location">
    <subcellularLocation>
        <location evidence="9">Cell membrane</location>
    </subcellularLocation>
</comment>
<comment type="polymorphism">
    <text evidence="9">There are several alleles. The sequence shown is that of IMGT allele TRGV2*03.</text>
</comment>
<gene>
    <name evidence="8" type="primary">TRGV2</name>
    <name evidence="10" type="synonym">TCRGV2</name>
</gene>
<dbReference type="EMBL" id="AC007245">
    <property type="status" value="NOT_ANNOTATED_CDS"/>
    <property type="molecule type" value="Genomic_DNA"/>
</dbReference>
<dbReference type="SMR" id="A0A075B6R0"/>
<dbReference type="FunCoup" id="A0A075B6R0">
    <property type="interactions" value="310"/>
</dbReference>
<dbReference type="IMGT_GENE-DB" id="TRGV2"/>
<dbReference type="BioMuta" id="TRGV2"/>
<dbReference type="Ensembl" id="ENST00000426402.2">
    <property type="protein sequence ID" value="ENSP00000404928.2"/>
    <property type="gene ID" value="ENSG00000233306.2"/>
</dbReference>
<dbReference type="UCSC" id="uc064cyc.1">
    <property type="organism name" value="human"/>
</dbReference>
<dbReference type="AGR" id="HGNC:12287"/>
<dbReference type="GeneCards" id="TRGV2"/>
<dbReference type="HGNC" id="HGNC:12287">
    <property type="gene designation" value="TRGV2"/>
</dbReference>
<dbReference type="HPA" id="ENSG00000233306">
    <property type="expression patterns" value="Tissue enriched (lymphoid)"/>
</dbReference>
<dbReference type="neXtProt" id="NX_A0A075B6R0"/>
<dbReference type="OpenTargets" id="ENSG00000233306"/>
<dbReference type="VEuPathDB" id="HostDB:ENSG00000233306"/>
<dbReference type="GeneTree" id="ENSGT00940000153143"/>
<dbReference type="HOGENOM" id="CLU_077975_7_1_1"/>
<dbReference type="InParanoid" id="A0A075B6R0"/>
<dbReference type="OMA" id="ATWASHC"/>
<dbReference type="OrthoDB" id="9628507at2759"/>
<dbReference type="PAN-GO" id="A0A075B6R0">
    <property type="GO annotations" value="1 GO annotation based on evolutionary models"/>
</dbReference>
<dbReference type="PhylomeDB" id="A0A075B6R0"/>
<dbReference type="SignaLink" id="A0A075B6R0"/>
<dbReference type="PRO" id="PR:A0A075B6R0"/>
<dbReference type="Proteomes" id="UP000005640">
    <property type="component" value="Chromosome 7"/>
</dbReference>
<dbReference type="RNAct" id="A0A075B6R0">
    <property type="molecule type" value="protein"/>
</dbReference>
<dbReference type="Bgee" id="ENSG00000233306">
    <property type="expression patterns" value="Expressed in granulocyte and 83 other cell types or tissues"/>
</dbReference>
<dbReference type="GO" id="GO:0009897">
    <property type="term" value="C:external side of plasma membrane"/>
    <property type="evidence" value="ECO:0000318"/>
    <property type="project" value="GO_Central"/>
</dbReference>
<dbReference type="GO" id="GO:0042101">
    <property type="term" value="C:T cell receptor complex"/>
    <property type="evidence" value="ECO:0007669"/>
    <property type="project" value="UniProtKB-KW"/>
</dbReference>
<dbReference type="GO" id="GO:0002250">
    <property type="term" value="P:adaptive immune response"/>
    <property type="evidence" value="ECO:0007669"/>
    <property type="project" value="UniProtKB-KW"/>
</dbReference>
<dbReference type="GO" id="GO:0045087">
    <property type="term" value="P:innate immune response"/>
    <property type="evidence" value="ECO:0007669"/>
    <property type="project" value="UniProtKB-KW"/>
</dbReference>
<dbReference type="FunFam" id="2.60.40.10:FF:001866">
    <property type="entry name" value="T cell receptor gamma variable 3"/>
    <property type="match status" value="1"/>
</dbReference>
<dbReference type="Gene3D" id="2.60.40.10">
    <property type="entry name" value="Immunoglobulins"/>
    <property type="match status" value="1"/>
</dbReference>
<dbReference type="InterPro" id="IPR007110">
    <property type="entry name" value="Ig-like_dom"/>
</dbReference>
<dbReference type="InterPro" id="IPR036179">
    <property type="entry name" value="Ig-like_dom_sf"/>
</dbReference>
<dbReference type="InterPro" id="IPR013783">
    <property type="entry name" value="Ig-like_fold"/>
</dbReference>
<dbReference type="InterPro" id="IPR013106">
    <property type="entry name" value="Ig_V-set"/>
</dbReference>
<dbReference type="InterPro" id="IPR051117">
    <property type="entry name" value="TRG_var/const_region"/>
</dbReference>
<dbReference type="PANTHER" id="PTHR19256:SF67">
    <property type="entry name" value="T CELL RECEPTOR GAMMA VARIABLE 2-RELATED"/>
    <property type="match status" value="1"/>
</dbReference>
<dbReference type="PANTHER" id="PTHR19256">
    <property type="entry name" value="T-CELL RECEPTOR GAMMA CHAIN"/>
    <property type="match status" value="1"/>
</dbReference>
<dbReference type="Pfam" id="PF07686">
    <property type="entry name" value="V-set"/>
    <property type="match status" value="1"/>
</dbReference>
<dbReference type="SUPFAM" id="SSF48726">
    <property type="entry name" value="Immunoglobulin"/>
    <property type="match status" value="1"/>
</dbReference>
<dbReference type="PROSITE" id="PS50835">
    <property type="entry name" value="IG_LIKE"/>
    <property type="match status" value="1"/>
</dbReference>
<keyword id="KW-1064">Adaptive immunity</keyword>
<keyword id="KW-1003">Cell membrane</keyword>
<keyword id="KW-1015">Disulfide bond</keyword>
<keyword id="KW-0391">Immunity</keyword>
<keyword id="KW-0393">Immunoglobulin domain</keyword>
<keyword id="KW-0399">Innate immunity</keyword>
<keyword id="KW-0472">Membrane</keyword>
<keyword id="KW-0675">Receptor</keyword>
<keyword id="KW-1185">Reference proteome</keyword>
<keyword id="KW-0732">Signal</keyword>
<keyword id="KW-1279">T cell receptor</keyword>
<sequence length="118" mass="13310">MQWALAVLLAFLSPASQKSSNLEGRTKSVIRQTGSSAEITCDLAEGSNGYIHWYLHQEGKAPQRLQYYDSYNSKVVLESGVSPGKYYTYASTRNNLRLILRNLIENDFGVYYCATWDG</sequence>
<reference key="1">
    <citation type="journal article" date="2003" name="Nature">
        <title>The DNA sequence of human chromosome 7.</title>
        <authorList>
            <person name="Hillier L.W."/>
            <person name="Fulton R.S."/>
            <person name="Fulton L.A."/>
            <person name="Graves T.A."/>
            <person name="Pepin K.H."/>
            <person name="Wagner-McPherson C."/>
            <person name="Layman D."/>
            <person name="Maas J."/>
            <person name="Jaeger S."/>
            <person name="Walker R."/>
            <person name="Wylie K."/>
            <person name="Sekhon M."/>
            <person name="Becker M.C."/>
            <person name="O'Laughlin M.D."/>
            <person name="Schaller M.E."/>
            <person name="Fewell G.A."/>
            <person name="Delehaunty K.D."/>
            <person name="Miner T.L."/>
            <person name="Nash W.E."/>
            <person name="Cordes M."/>
            <person name="Du H."/>
            <person name="Sun H."/>
            <person name="Edwards J."/>
            <person name="Bradshaw-Cordum H."/>
            <person name="Ali J."/>
            <person name="Andrews S."/>
            <person name="Isak A."/>
            <person name="Vanbrunt A."/>
            <person name="Nguyen C."/>
            <person name="Du F."/>
            <person name="Lamar B."/>
            <person name="Courtney L."/>
            <person name="Kalicki J."/>
            <person name="Ozersky P."/>
            <person name="Bielicki L."/>
            <person name="Scott K."/>
            <person name="Holmes A."/>
            <person name="Harkins R."/>
            <person name="Harris A."/>
            <person name="Strong C.M."/>
            <person name="Hou S."/>
            <person name="Tomlinson C."/>
            <person name="Dauphin-Kohlberg S."/>
            <person name="Kozlowicz-Reilly A."/>
            <person name="Leonard S."/>
            <person name="Rohlfing T."/>
            <person name="Rock S.M."/>
            <person name="Tin-Wollam A.-M."/>
            <person name="Abbott A."/>
            <person name="Minx P."/>
            <person name="Maupin R."/>
            <person name="Strowmatt C."/>
            <person name="Latreille P."/>
            <person name="Miller N."/>
            <person name="Johnson D."/>
            <person name="Murray J."/>
            <person name="Woessner J.P."/>
            <person name="Wendl M.C."/>
            <person name="Yang S.-P."/>
            <person name="Schultz B.R."/>
            <person name="Wallis J.W."/>
            <person name="Spieth J."/>
            <person name="Bieri T.A."/>
            <person name="Nelson J.O."/>
            <person name="Berkowicz N."/>
            <person name="Wohldmann P.E."/>
            <person name="Cook L.L."/>
            <person name="Hickenbotham M.T."/>
            <person name="Eldred J."/>
            <person name="Williams D."/>
            <person name="Bedell J.A."/>
            <person name="Mardis E.R."/>
            <person name="Clifton S.W."/>
            <person name="Chissoe S.L."/>
            <person name="Marra M.A."/>
            <person name="Raymond C."/>
            <person name="Haugen E."/>
            <person name="Gillett W."/>
            <person name="Zhou Y."/>
            <person name="James R."/>
            <person name="Phelps K."/>
            <person name="Iadanoto S."/>
            <person name="Bubb K."/>
            <person name="Simms E."/>
            <person name="Levy R."/>
            <person name="Clendenning J."/>
            <person name="Kaul R."/>
            <person name="Kent W.J."/>
            <person name="Furey T.S."/>
            <person name="Baertsch R.A."/>
            <person name="Brent M.R."/>
            <person name="Keibler E."/>
            <person name="Flicek P."/>
            <person name="Bork P."/>
            <person name="Suyama M."/>
            <person name="Bailey J.A."/>
            <person name="Portnoy M.E."/>
            <person name="Torrents D."/>
            <person name="Chinwalla A.T."/>
            <person name="Gish W.R."/>
            <person name="Eddy S.R."/>
            <person name="McPherson J.D."/>
            <person name="Olson M.V."/>
            <person name="Eichler E.E."/>
            <person name="Green E.D."/>
            <person name="Waterston R.H."/>
            <person name="Wilson R.K."/>
        </authorList>
    </citation>
    <scope>NUCLEOTIDE SEQUENCE [LARGE SCALE GENOMIC DNA] (IMGT ALLELE TRGV2*03)</scope>
</reference>
<reference key="2">
    <citation type="book" date="2001" name="The T Cell Receptor FactsBook.">
        <title>The T Cell Receptor FactsBook.</title>
        <editorList>
            <person name="Lefranc M.P."/>
            <person name="Lefranc G."/>
        </editorList>
        <authorList>
            <person name="Lefranc M.P."/>
            <person name="Lefranc G."/>
        </authorList>
    </citation>
    <scope>NOMENCLATURE</scope>
</reference>
<reference key="3">
    <citation type="journal article" date="2013" name="Nat. Rev. Immunol.">
        <title>Six-of-the-best: unique contributions of gammadelta T cells to immunology.</title>
        <authorList>
            <person name="Vantourout P."/>
            <person name="Hayday A."/>
        </authorList>
    </citation>
    <scope>REVIEW ON FUNCTION AND ANTIGEN RECOGNITION</scope>
</reference>
<reference key="4">
    <citation type="journal article" date="2014" name="Annu. Rev. Immunol.">
        <title>gammadelta T cells: first line of defense and beyond.</title>
        <authorList>
            <person name="Chien Y.H."/>
            <person name="Meyer C."/>
            <person name="Bonneville M."/>
        </authorList>
    </citation>
    <scope>REVIEW ON GAMMA DELTA T CELL RECEPTOR DIVERSITY</scope>
</reference>
<reference key="5">
    <citation type="journal article" date="2014" name="Front. Immunol.">
        <title>Immunoglobulin and T Cell Receptor Genes: IMGT((R)) and the Birth and Rise of Immunoinformatics.</title>
        <authorList>
            <person name="Lefranc M.P."/>
        </authorList>
    </citation>
    <scope>NOMENCLATURE</scope>
</reference>
<reference key="6">
    <citation type="journal article" date="2015" name="Front. Immunol.">
        <title>Five Layers of Receptor Signaling in gammadelta T-Cell Differentiation and Activation.</title>
        <authorList>
            <person name="Ribeiro S.T."/>
            <person name="Ribot J.C."/>
            <person name="Silva-Santos B."/>
        </authorList>
    </citation>
    <scope>REVIEW ON T CELL RECEPTOR SIGNALING</scope>
    <scope>SUBUNIT</scope>
</reference>
<reference key="7">
    <citation type="journal article" date="2017" name="Nat. Rev. Immunol.">
        <title>gammadelta T cells in homeostasis and host defence of epithelial barrier tissues.</title>
        <authorList>
            <person name="Nielsen M.M."/>
            <person name="Witherden D.A."/>
            <person name="Havran W.L."/>
        </authorList>
    </citation>
    <scope>REVIEW ON FUNCTION</scope>
</reference>
<protein>
    <recommendedName>
        <fullName evidence="8">T cell receptor gamma variable 2</fullName>
    </recommendedName>
</protein>
<proteinExistence type="evidence at protein level"/>
<name>TRGV2_HUMAN</name>
<accession>A0A075B6R0</accession>
<evidence type="ECO:0000255" key="1"/>
<evidence type="ECO:0000255" key="2">
    <source>
        <dbReference type="PROSITE-ProRule" id="PRU00114"/>
    </source>
</evidence>
<evidence type="ECO:0000303" key="3">
    <source>
    </source>
</evidence>
<evidence type="ECO:0000303" key="4">
    <source>
    </source>
</evidence>
<evidence type="ECO:0000303" key="5">
    <source>
    </source>
</evidence>
<evidence type="ECO:0000303" key="6">
    <source>
    </source>
</evidence>
<evidence type="ECO:0000303" key="7">
    <source>
    </source>
</evidence>
<evidence type="ECO:0000303" key="8">
    <source ref="2"/>
</evidence>
<evidence type="ECO:0000305" key="9"/>
<evidence type="ECO:0000312" key="10">
    <source>
        <dbReference type="HGNC" id="HGNC:12287"/>
    </source>
</evidence>
<organism>
    <name type="scientific">Homo sapiens</name>
    <name type="common">Human</name>
    <dbReference type="NCBI Taxonomy" id="9606"/>
    <lineage>
        <taxon>Eukaryota</taxon>
        <taxon>Metazoa</taxon>
        <taxon>Chordata</taxon>
        <taxon>Craniata</taxon>
        <taxon>Vertebrata</taxon>
        <taxon>Euteleostomi</taxon>
        <taxon>Mammalia</taxon>
        <taxon>Eutheria</taxon>
        <taxon>Euarchontoglires</taxon>
        <taxon>Primates</taxon>
        <taxon>Haplorrhini</taxon>
        <taxon>Catarrhini</taxon>
        <taxon>Hominidae</taxon>
        <taxon>Homo</taxon>
    </lineage>
</organism>